<organism>
    <name type="scientific">Homo sapiens</name>
    <name type="common">Human</name>
    <dbReference type="NCBI Taxonomy" id="9606"/>
    <lineage>
        <taxon>Eukaryota</taxon>
        <taxon>Metazoa</taxon>
        <taxon>Chordata</taxon>
        <taxon>Craniata</taxon>
        <taxon>Vertebrata</taxon>
        <taxon>Euteleostomi</taxon>
        <taxon>Mammalia</taxon>
        <taxon>Eutheria</taxon>
        <taxon>Euarchontoglires</taxon>
        <taxon>Primates</taxon>
        <taxon>Haplorrhini</taxon>
        <taxon>Catarrhini</taxon>
        <taxon>Hominidae</taxon>
        <taxon>Homo</taxon>
    </lineage>
</organism>
<gene>
    <name type="primary">MAP2K4</name>
    <name type="synonym">JNKK1</name>
    <name type="synonym">MEK4</name>
    <name type="synonym">MKK4</name>
    <name type="synonym">PRKMK4</name>
    <name type="synonym">SEK1</name>
    <name type="synonym">SERK1</name>
    <name type="synonym">SKK1</name>
</gene>
<accession>P45985</accession>
<accession>B2R7N7</accession>
<accession>B3KYB2</accession>
<accession>D3DTS5</accession>
<accession>Q5U0B8</accession>
<accession>Q6FHX4</accession>
<accession>Q6P9H2</accession>
<accession>Q6PIE6</accession>
<name>MP2K4_HUMAN</name>
<proteinExistence type="evidence at protein level"/>
<keyword id="KW-0002">3D-structure</keyword>
<keyword id="KW-0007">Acetylation</keyword>
<keyword id="KW-0025">Alternative splicing</keyword>
<keyword id="KW-0053">Apoptosis</keyword>
<keyword id="KW-0067">ATP-binding</keyword>
<keyword id="KW-0963">Cytoplasm</keyword>
<keyword id="KW-0418">Kinase</keyword>
<keyword id="KW-0488">Methylation</keyword>
<keyword id="KW-0547">Nucleotide-binding</keyword>
<keyword id="KW-0539">Nucleus</keyword>
<keyword id="KW-0597">Phosphoprotein</keyword>
<keyword id="KW-1267">Proteomics identification</keyword>
<keyword id="KW-1185">Reference proteome</keyword>
<keyword id="KW-0723">Serine/threonine-protein kinase</keyword>
<keyword id="KW-0346">Stress response</keyword>
<keyword id="KW-0808">Transferase</keyword>
<keyword id="KW-0829">Tyrosine-protein kinase</keyword>
<sequence length="399" mass="44288">MAAPSPSGGGGSGGGSGSGTPGPVGSPAPGHPAVSSMQGKRKALKLNFANPPFKSTARFTLNPNPTGVQNPHIERLRTHSIESSGKLKISPEQHWDFTAEDLKDLGEIGRGAYGSVNKMVHKPSGQIMAVKRIRSTVDEKEQKQLLMDLDVVMRSSDCPYIVQFYGALFREGDCWICMELMSTSFDKFYKYVYSVLDDVIPEEILGKITLATVKALNHLKENLKIIHRDIKPSNILLDRSGNIKLCDFGISGQLVDSIAKTRDAGCRPYMAPERIDPSASRQGYDVRSDVWSLGITLYELATGRFPYPKWNSVFDQLTQVVKGDPPQLSNSEEREFSPSFINFVNLCLTKDESKRPKYKELLKHPFILMYEERAVEVACYVCKILDQMPATPSSPMYVD</sequence>
<protein>
    <recommendedName>
        <fullName>Dual specificity mitogen-activated protein kinase kinase 4</fullName>
        <shortName>MAP kinase kinase 4</shortName>
        <shortName>MAPKK 4</shortName>
        <ecNumber>2.7.12.2</ecNumber>
    </recommendedName>
    <alternativeName>
        <fullName>JNK-activating kinase 1</fullName>
    </alternativeName>
    <alternativeName>
        <fullName>MAPK/ERK kinase 4</fullName>
        <shortName>MEK 4</shortName>
    </alternativeName>
    <alternativeName>
        <fullName>SAPK/ERK kinase 1</fullName>
        <shortName>SEK1</shortName>
    </alternativeName>
    <alternativeName>
        <fullName>Stress-activated protein kinase kinase 1</fullName>
        <shortName>SAPK kinase 1</shortName>
        <shortName>SAPKK-1</shortName>
        <shortName>SAPKK1</shortName>
    </alternativeName>
    <alternativeName>
        <fullName>c-Jun N-terminal kinase kinase 1</fullName>
        <shortName>JNKK</shortName>
    </alternativeName>
</protein>
<evidence type="ECO:0000250" key="1"/>
<evidence type="ECO:0000255" key="2">
    <source>
        <dbReference type="PROSITE-ProRule" id="PRU00159"/>
    </source>
</evidence>
<evidence type="ECO:0000255" key="3">
    <source>
        <dbReference type="PROSITE-ProRule" id="PRU10027"/>
    </source>
</evidence>
<evidence type="ECO:0000256" key="4">
    <source>
        <dbReference type="SAM" id="MobiDB-lite"/>
    </source>
</evidence>
<evidence type="ECO:0000269" key="5">
    <source>
    </source>
</evidence>
<evidence type="ECO:0000269" key="6">
    <source>
    </source>
</evidence>
<evidence type="ECO:0000269" key="7">
    <source>
    </source>
</evidence>
<evidence type="ECO:0000269" key="8">
    <source>
    </source>
</evidence>
<evidence type="ECO:0000269" key="9">
    <source>
    </source>
</evidence>
<evidence type="ECO:0000269" key="10">
    <source>
    </source>
</evidence>
<evidence type="ECO:0000269" key="11">
    <source>
    </source>
</evidence>
<evidence type="ECO:0000269" key="12">
    <source>
    </source>
</evidence>
<evidence type="ECO:0000303" key="13">
    <source>
    </source>
</evidence>
<evidence type="ECO:0000305" key="14"/>
<evidence type="ECO:0007744" key="15">
    <source>
    </source>
</evidence>
<evidence type="ECO:0007744" key="16">
    <source>
    </source>
</evidence>
<evidence type="ECO:0007744" key="17">
    <source>
    </source>
</evidence>
<evidence type="ECO:0007744" key="18">
    <source>
    </source>
</evidence>
<evidence type="ECO:0007744" key="19">
    <source>
    </source>
</evidence>
<evidence type="ECO:0007829" key="20">
    <source>
        <dbReference type="PDB" id="3ALN"/>
    </source>
</evidence>
<evidence type="ECO:0007829" key="21">
    <source>
        <dbReference type="PDB" id="3ALO"/>
    </source>
</evidence>
<evidence type="ECO:0007829" key="22">
    <source>
        <dbReference type="PDB" id="3VUT"/>
    </source>
</evidence>
<comment type="function">
    <text evidence="11">Dual specificity protein kinase which acts as an essential component of the MAP kinase signal transduction pathway. Essential component of the stress-activated protein kinase/c-Jun N-terminal kinase (SAP/JNK) signaling pathway. With MAP2K7/MKK7, is the one of the only known kinase to directly activate the stress-activated protein kinase/c-Jun N-terminal kinases MAPK8/JNK1, MAPK9/JNK2 and MAPK10/JNK3. MAP2K4/MKK4 and MAP2K7/MKK7 both activate the JNKs by phosphorylation, but they differ in their preference for the phosphorylation site in the Thr-Pro-Tyr motif. MAP2K4 shows preference for phosphorylation of the Tyr residue and MAP2K7/MKK7 for the Thr residue. The phosphorylation of the Thr residue by MAP2K7/MKK7 seems to be the prerequisite for JNK activation at least in response to pro-inflammatory cytokines, while other stimuli activate both MAP2K4/MKK4 and MAP2K7/MKK7 which synergistically phosphorylate JNKs. MAP2K4 is required for maintaining peripheral lymphoid homeostasis. The MKK/JNK signaling pathway is also involved in mitochondrial death signaling pathway, including the release cytochrome c, leading to apoptosis. Whereas MAP2K7/MKK7 exclusively activates JNKs, MAP2K4/MKK4 additionally activates the p38 MAPKs MAPK11, MAPK12, MAPK13 and MAPK14.</text>
</comment>
<comment type="catalytic activity">
    <reaction>
        <text>L-seryl-[protein] + ATP = O-phospho-L-seryl-[protein] + ADP + H(+)</text>
        <dbReference type="Rhea" id="RHEA:17989"/>
        <dbReference type="Rhea" id="RHEA-COMP:9863"/>
        <dbReference type="Rhea" id="RHEA-COMP:11604"/>
        <dbReference type="ChEBI" id="CHEBI:15378"/>
        <dbReference type="ChEBI" id="CHEBI:29999"/>
        <dbReference type="ChEBI" id="CHEBI:30616"/>
        <dbReference type="ChEBI" id="CHEBI:83421"/>
        <dbReference type="ChEBI" id="CHEBI:456216"/>
        <dbReference type="EC" id="2.7.12.2"/>
    </reaction>
</comment>
<comment type="catalytic activity">
    <reaction>
        <text>L-threonyl-[protein] + ATP = O-phospho-L-threonyl-[protein] + ADP + H(+)</text>
        <dbReference type="Rhea" id="RHEA:46608"/>
        <dbReference type="Rhea" id="RHEA-COMP:11060"/>
        <dbReference type="Rhea" id="RHEA-COMP:11605"/>
        <dbReference type="ChEBI" id="CHEBI:15378"/>
        <dbReference type="ChEBI" id="CHEBI:30013"/>
        <dbReference type="ChEBI" id="CHEBI:30616"/>
        <dbReference type="ChEBI" id="CHEBI:61977"/>
        <dbReference type="ChEBI" id="CHEBI:456216"/>
        <dbReference type="EC" id="2.7.12.2"/>
    </reaction>
</comment>
<comment type="catalytic activity">
    <reaction>
        <text>L-tyrosyl-[protein] + ATP = O-phospho-L-tyrosyl-[protein] + ADP + H(+)</text>
        <dbReference type="Rhea" id="RHEA:10596"/>
        <dbReference type="Rhea" id="RHEA-COMP:10136"/>
        <dbReference type="Rhea" id="RHEA-COMP:20101"/>
        <dbReference type="ChEBI" id="CHEBI:15378"/>
        <dbReference type="ChEBI" id="CHEBI:30616"/>
        <dbReference type="ChEBI" id="CHEBI:46858"/>
        <dbReference type="ChEBI" id="CHEBI:61978"/>
        <dbReference type="ChEBI" id="CHEBI:456216"/>
        <dbReference type="EC" id="2.7.12.2"/>
    </reaction>
</comment>
<comment type="activity regulation">
    <text evidence="12">Activated in response to a variety of cellular stresses, including UV and gamma-irradiation, heat shock, hyperosmolarity, T-cell receptor stimulation, peroxide and inflammatory cytokines. Also activated by developmental cues. MAP2K4/MKK4 is activated by the majority of MKKKs, such as MAP3K5/ASK1, MAP3K1/MEKK1, MAP3K7/TAK1, MAP3K10/MLK2, MAP3K11/MLK3, MAP3K12/DLK and MAP3K13/LZK.</text>
</comment>
<comment type="subunit">
    <text evidence="1 5 6 7 10 12">Interacts with SPAG9 (By similarity). Interacts (via its D domain) with its substrates MAPK8/JNK1, MAPK9/JNK2, MAPK10/JNK3, MAPK11 and MAPK14. Interacts (via its DVD domain) with MAP3Ks activators like MAP3K1/MEKK1 and MAP3K11/MLK3. Interacts with ARRB1, ARRB2 and MAPK8IP3/JIP3.</text>
</comment>
<comment type="interaction">
    <interactant intactId="EBI-447868">
        <id>P45985</id>
    </interactant>
    <interactant intactId="EBI-49776">
        <id>Q13233</id>
        <label>MAP3K1</label>
    </interactant>
    <organismsDiffer>false</organismsDiffer>
    <experiments>3</experiments>
</comment>
<comment type="interaction">
    <interactant intactId="EBI-447868">
        <id>P45985</id>
    </interactant>
    <interactant intactId="EBI-286483">
        <id>P45983</id>
        <label>MAPK8</label>
    </interactant>
    <organismsDiffer>false</organismsDiffer>
    <experiments>3</experiments>
</comment>
<comment type="subcellular location">
    <subcellularLocation>
        <location evidence="1">Cytoplasm</location>
    </subcellularLocation>
    <subcellularLocation>
        <location evidence="1">Nucleus</location>
    </subcellularLocation>
</comment>
<comment type="alternative products">
    <event type="alternative splicing"/>
    <isoform>
        <id>P45985-1</id>
        <name>1</name>
        <sequence type="displayed"/>
    </isoform>
    <isoform>
        <id>P45985-2</id>
        <name>2</name>
        <sequence type="described" ref="VSP_038838"/>
    </isoform>
</comment>
<comment type="tissue specificity">
    <text>Abundant expression is seen in the skeletal muscle. It is also widely expressed in other tissues.</text>
</comment>
<comment type="domain">
    <text>The DVD domain (residues 364-387) contains a conserved docking site and is found in the mammalian MAP kinase kinases (MAP2Ks). The DVD sites bind to their specific upstream MAP kinase kinase kinases (MAP3Ks) and are essential for activation.</text>
</comment>
<comment type="domain">
    <text>The D domain (residues 34-52) contains a conserved docking site and is required for the binding to MAPK substrates.</text>
</comment>
<comment type="PTM">
    <text evidence="12">Activated by phosphorylation on Ser-257 and Thr-261 by MAP kinase kinase kinases (MAP3Ks).</text>
</comment>
<comment type="similarity">
    <text evidence="14">Belongs to the protein kinase superfamily. STE Ser/Thr protein kinase family. MAP kinase kinase subfamily.</text>
</comment>
<comment type="online information" name="Atlas of Genetics and Cytogenetics in Oncology and Haematology">
    <link uri="https://atlasgeneticsoncology.org/gene/244/MAP2K4"/>
</comment>
<feature type="initiator methionine" description="Removed" evidence="17">
    <location>
        <position position="1"/>
    </location>
</feature>
<feature type="chain" id="PRO_0000086381" description="Dual specificity mitogen-activated protein kinase kinase 4">
    <location>
        <begin position="2"/>
        <end position="399"/>
    </location>
</feature>
<feature type="domain" description="Protein kinase" evidence="2">
    <location>
        <begin position="102"/>
        <end position="367"/>
    </location>
</feature>
<feature type="region of interest" description="Disordered" evidence="4">
    <location>
        <begin position="1"/>
        <end position="40"/>
    </location>
</feature>
<feature type="region of interest" description="D domain">
    <location>
        <begin position="37"/>
        <end position="52"/>
    </location>
</feature>
<feature type="region of interest" description="DVD domain">
    <location>
        <begin position="364"/>
        <end position="387"/>
    </location>
</feature>
<feature type="compositionally biased region" description="Gly residues" evidence="4">
    <location>
        <begin position="7"/>
        <end position="22"/>
    </location>
</feature>
<feature type="active site" description="Proton acceptor" evidence="2 3">
    <location>
        <position position="229"/>
    </location>
</feature>
<feature type="binding site" evidence="2">
    <location>
        <begin position="108"/>
        <end position="116"/>
    </location>
    <ligand>
        <name>ATP</name>
        <dbReference type="ChEBI" id="CHEBI:30616"/>
    </ligand>
</feature>
<feature type="binding site" evidence="2">
    <location>
        <position position="131"/>
    </location>
    <ligand>
        <name>ATP</name>
        <dbReference type="ChEBI" id="CHEBI:30616"/>
    </ligand>
</feature>
<feature type="site" description="Cleavage; by anthrax lethal factor">
    <location>
        <begin position="45"/>
        <end position="46"/>
    </location>
</feature>
<feature type="site" description="Cleavage; by anthrax lethal factor">
    <location>
        <begin position="58"/>
        <end position="59"/>
    </location>
</feature>
<feature type="modified residue" description="N-acetylalanine" evidence="17">
    <location>
        <position position="2"/>
    </location>
</feature>
<feature type="modified residue" description="Asymmetric dimethylarginine; alternate" evidence="18">
    <location>
        <position position="58"/>
    </location>
</feature>
<feature type="modified residue" description="Omega-N-methylarginine; alternate" evidence="18">
    <location>
        <position position="58"/>
    </location>
</feature>
<feature type="modified residue" description="Phosphoserine" evidence="15">
    <location>
        <position position="90"/>
    </location>
</feature>
<feature type="modified residue" description="Phosphoserine; by MAP3K" evidence="16 19">
    <location>
        <position position="257"/>
    </location>
</feature>
<feature type="modified residue" description="Phosphothreonine; by MAP3K" evidence="12">
    <location>
        <position position="261"/>
    </location>
</feature>
<feature type="splice variant" id="VSP_038838" description="In isoform 2." evidence="13">
    <original>G</original>
    <variation>GFQINFCEKAQS</variation>
    <location>
        <position position="39"/>
    </location>
</feature>
<feature type="sequence variant" id="VAR_062963" description="In dbSNP:rs17855590." evidence="8">
    <original>S</original>
    <variation>R</variation>
    <location>
        <position position="16"/>
    </location>
</feature>
<feature type="sequence variant" id="VAR_040818" description="In a lung squamous cell carcinoma sample; somatic mutation." evidence="9">
    <original>Q</original>
    <variation>L</variation>
    <location>
        <position position="142"/>
    </location>
</feature>
<feature type="sequence variant" id="VAR_040819" description="In a colorectal adenocarcinoma sample; somatic mutation; dbSNP:rs1567657403." evidence="9">
    <original>R</original>
    <variation>W</variation>
    <location>
        <position position="154"/>
    </location>
</feature>
<feature type="sequence variant" id="VAR_040820" description="In an ovarian serous carcinoma sample; somatic mutation." evidence="9">
    <original>N</original>
    <variation>I</variation>
    <location>
        <position position="234"/>
    </location>
</feature>
<feature type="sequence variant" id="VAR_040821" description="In a metastatic melanoma sample; somatic mutation." evidence="9">
    <original>S</original>
    <variation>N</variation>
    <location>
        <position position="251"/>
    </location>
</feature>
<feature type="sequence variant" id="VAR_040822" description="In a colorectal adenocarcinoma sample; somatic mutation; dbSNP:rs753665559." evidence="9">
    <original>A</original>
    <variation>T</variation>
    <location>
        <position position="279"/>
    </location>
</feature>
<feature type="sequence conflict" description="In Ref. 4; CAG38801." evidence="14" ref="4">
    <original>K</original>
    <variation>R</variation>
    <location>
        <position position="118"/>
    </location>
</feature>
<feature type="sequence conflict" description="In Ref. 6; BAG35884." evidence="14" ref="6">
    <original>E</original>
    <variation>G</variation>
    <location>
        <position position="179"/>
    </location>
</feature>
<feature type="sequence conflict" description="In Ref. 10; AAH60764." evidence="14" ref="10">
    <original>P</original>
    <variation>L</variation>
    <location>
        <position position="356"/>
    </location>
</feature>
<feature type="strand" evidence="22">
    <location>
        <begin position="81"/>
        <end position="83"/>
    </location>
</feature>
<feature type="strand" evidence="20">
    <location>
        <begin position="85"/>
        <end position="88"/>
    </location>
</feature>
<feature type="strand" evidence="20">
    <location>
        <begin position="93"/>
        <end position="95"/>
    </location>
</feature>
<feature type="strand" evidence="20">
    <location>
        <begin position="101"/>
        <end position="103"/>
    </location>
</feature>
<feature type="strand" evidence="20">
    <location>
        <begin position="107"/>
        <end position="110"/>
    </location>
</feature>
<feature type="strand" evidence="20">
    <location>
        <begin position="112"/>
        <end position="121"/>
    </location>
</feature>
<feature type="turn" evidence="20">
    <location>
        <begin position="122"/>
        <end position="124"/>
    </location>
</feature>
<feature type="strand" evidence="20">
    <location>
        <begin position="127"/>
        <end position="134"/>
    </location>
</feature>
<feature type="helix" evidence="20">
    <location>
        <begin position="139"/>
        <end position="153"/>
    </location>
</feature>
<feature type="strand" evidence="20">
    <location>
        <begin position="164"/>
        <end position="169"/>
    </location>
</feature>
<feature type="strand" evidence="20">
    <location>
        <begin position="171"/>
        <end position="178"/>
    </location>
</feature>
<feature type="strand" evidence="20">
    <location>
        <begin position="182"/>
        <end position="184"/>
    </location>
</feature>
<feature type="helix" evidence="20">
    <location>
        <begin position="185"/>
        <end position="194"/>
    </location>
</feature>
<feature type="helix" evidence="20">
    <location>
        <begin position="202"/>
        <end position="223"/>
    </location>
</feature>
<feature type="helix" evidence="20">
    <location>
        <begin position="232"/>
        <end position="234"/>
    </location>
</feature>
<feature type="strand" evidence="20">
    <location>
        <begin position="235"/>
        <end position="237"/>
    </location>
</feature>
<feature type="strand" evidence="20">
    <location>
        <begin position="243"/>
        <end position="245"/>
    </location>
</feature>
<feature type="strand" evidence="20">
    <location>
        <begin position="249"/>
        <end position="251"/>
    </location>
</feature>
<feature type="strand" evidence="22">
    <location>
        <begin position="255"/>
        <end position="259"/>
    </location>
</feature>
<feature type="strand" evidence="21">
    <location>
        <begin position="267"/>
        <end position="270"/>
    </location>
</feature>
<feature type="helix" evidence="21">
    <location>
        <begin position="272"/>
        <end position="274"/>
    </location>
</feature>
<feature type="helix" evidence="20">
    <location>
        <begin position="287"/>
        <end position="302"/>
    </location>
</feature>
<feature type="strand" evidence="21">
    <location>
        <begin position="312"/>
        <end position="314"/>
    </location>
</feature>
<feature type="strand" evidence="21">
    <location>
        <begin position="316"/>
        <end position="321"/>
    </location>
</feature>
<feature type="helix" evidence="20">
    <location>
        <begin position="338"/>
        <end position="347"/>
    </location>
</feature>
<feature type="helix" evidence="20">
    <location>
        <begin position="352"/>
        <end position="354"/>
    </location>
</feature>
<feature type="helix" evidence="20">
    <location>
        <begin position="358"/>
        <end position="361"/>
    </location>
</feature>
<feature type="helix" evidence="20">
    <location>
        <begin position="365"/>
        <end position="372"/>
    </location>
</feature>
<feature type="helix" evidence="20">
    <location>
        <begin position="377"/>
        <end position="387"/>
    </location>
</feature>
<dbReference type="EC" id="2.7.12.2"/>
<dbReference type="EMBL" id="L36870">
    <property type="protein sequence ID" value="AAC41719.1"/>
    <property type="molecule type" value="mRNA"/>
</dbReference>
<dbReference type="EMBL" id="U17743">
    <property type="protein sequence ID" value="AAC50127.1"/>
    <property type="molecule type" value="mRNA"/>
</dbReference>
<dbReference type="EMBL" id="AF070090">
    <property type="protein sequence ID" value="AAC24130.1"/>
    <property type="molecule type" value="Genomic_DNA"/>
</dbReference>
<dbReference type="EMBL" id="AF070080">
    <property type="protein sequence ID" value="AAC24130.1"/>
    <property type="status" value="JOINED"/>
    <property type="molecule type" value="Genomic_DNA"/>
</dbReference>
<dbReference type="EMBL" id="AF070081">
    <property type="protein sequence ID" value="AAC24130.1"/>
    <property type="status" value="JOINED"/>
    <property type="molecule type" value="Genomic_DNA"/>
</dbReference>
<dbReference type="EMBL" id="AF070082">
    <property type="protein sequence ID" value="AAC24130.1"/>
    <property type="status" value="JOINED"/>
    <property type="molecule type" value="Genomic_DNA"/>
</dbReference>
<dbReference type="EMBL" id="AF070083">
    <property type="protein sequence ID" value="AAC24130.1"/>
    <property type="status" value="JOINED"/>
    <property type="molecule type" value="Genomic_DNA"/>
</dbReference>
<dbReference type="EMBL" id="AF070084">
    <property type="protein sequence ID" value="AAC24130.1"/>
    <property type="status" value="JOINED"/>
    <property type="molecule type" value="Genomic_DNA"/>
</dbReference>
<dbReference type="EMBL" id="AF070085">
    <property type="protein sequence ID" value="AAC24130.1"/>
    <property type="status" value="JOINED"/>
    <property type="molecule type" value="Genomic_DNA"/>
</dbReference>
<dbReference type="EMBL" id="AF070086">
    <property type="protein sequence ID" value="AAC24130.1"/>
    <property type="status" value="JOINED"/>
    <property type="molecule type" value="Genomic_DNA"/>
</dbReference>
<dbReference type="EMBL" id="AF070087">
    <property type="protein sequence ID" value="AAC24130.1"/>
    <property type="status" value="JOINED"/>
    <property type="molecule type" value="Genomic_DNA"/>
</dbReference>
<dbReference type="EMBL" id="AF070088">
    <property type="protein sequence ID" value="AAC24130.1"/>
    <property type="status" value="JOINED"/>
    <property type="molecule type" value="Genomic_DNA"/>
</dbReference>
<dbReference type="EMBL" id="AF070089">
    <property type="protein sequence ID" value="AAC24130.1"/>
    <property type="status" value="JOINED"/>
    <property type="molecule type" value="Genomic_DNA"/>
</dbReference>
<dbReference type="EMBL" id="CR536564">
    <property type="protein sequence ID" value="CAG38801.1"/>
    <property type="molecule type" value="mRNA"/>
</dbReference>
<dbReference type="EMBL" id="BT019676">
    <property type="protein sequence ID" value="AAV38482.1"/>
    <property type="molecule type" value="mRNA"/>
</dbReference>
<dbReference type="EMBL" id="AK131544">
    <property type="protein sequence ID" value="BAG54774.1"/>
    <property type="molecule type" value="mRNA"/>
</dbReference>
<dbReference type="EMBL" id="AK313053">
    <property type="protein sequence ID" value="BAG35884.1"/>
    <property type="molecule type" value="mRNA"/>
</dbReference>
<dbReference type="EMBL" id="DQ015703">
    <property type="protein sequence ID" value="AAY22176.1"/>
    <property type="molecule type" value="Genomic_DNA"/>
</dbReference>
<dbReference type="EMBL" id="AC005244">
    <property type="status" value="NOT_ANNOTATED_CDS"/>
    <property type="molecule type" value="Genomic_DNA"/>
</dbReference>
<dbReference type="EMBL" id="AC005410">
    <property type="status" value="NOT_ANNOTATED_CDS"/>
    <property type="molecule type" value="Genomic_DNA"/>
</dbReference>
<dbReference type="EMBL" id="CH471108">
    <property type="protein sequence ID" value="EAW89975.1"/>
    <property type="molecule type" value="Genomic_DNA"/>
</dbReference>
<dbReference type="EMBL" id="CH471108">
    <property type="protein sequence ID" value="EAW89974.1"/>
    <property type="molecule type" value="Genomic_DNA"/>
</dbReference>
<dbReference type="EMBL" id="CH471108">
    <property type="protein sequence ID" value="EAW89976.1"/>
    <property type="molecule type" value="Genomic_DNA"/>
</dbReference>
<dbReference type="EMBL" id="BC036032">
    <property type="protein sequence ID" value="AAH36032.1"/>
    <property type="molecule type" value="mRNA"/>
</dbReference>
<dbReference type="EMBL" id="BC060764">
    <property type="protein sequence ID" value="AAH60764.1"/>
    <property type="molecule type" value="mRNA"/>
</dbReference>
<dbReference type="CCDS" id="CCDS11162.1">
    <molecule id="P45985-1"/>
</dbReference>
<dbReference type="CCDS" id="CCDS62095.1">
    <molecule id="P45985-2"/>
</dbReference>
<dbReference type="PIR" id="I38901">
    <property type="entry name" value="I38901"/>
</dbReference>
<dbReference type="RefSeq" id="NP_001268364.1">
    <molecule id="P45985-2"/>
    <property type="nucleotide sequence ID" value="NM_001281435.2"/>
</dbReference>
<dbReference type="RefSeq" id="NP_003001.1">
    <molecule id="P45985-1"/>
    <property type="nucleotide sequence ID" value="NM_003010.4"/>
</dbReference>
<dbReference type="PDB" id="3ALN">
    <property type="method" value="X-ray"/>
    <property type="resolution" value="2.30 A"/>
    <property type="chains" value="A/B/C=80-399"/>
</dbReference>
<dbReference type="PDB" id="3ALO">
    <property type="method" value="X-ray"/>
    <property type="resolution" value="2.60 A"/>
    <property type="chains" value="A=80-399"/>
</dbReference>
<dbReference type="PDB" id="3VUT">
    <property type="method" value="X-ray"/>
    <property type="resolution" value="3.50 A"/>
    <property type="chains" value="A/B=80-399"/>
</dbReference>
<dbReference type="PDB" id="8YP5">
    <property type="method" value="X-ray"/>
    <property type="resolution" value="2.50 A"/>
    <property type="chains" value="A=80-399"/>
</dbReference>
<dbReference type="PDBsum" id="3ALN"/>
<dbReference type="PDBsum" id="3ALO"/>
<dbReference type="PDBsum" id="3VUT"/>
<dbReference type="PDBsum" id="8YP5"/>
<dbReference type="SMR" id="P45985"/>
<dbReference type="BioGRID" id="112315">
    <property type="interactions" value="68"/>
</dbReference>
<dbReference type="CORUM" id="P45985"/>
<dbReference type="FunCoup" id="P45985">
    <property type="interactions" value="2185"/>
</dbReference>
<dbReference type="IntAct" id="P45985">
    <property type="interactions" value="22"/>
</dbReference>
<dbReference type="MINT" id="P45985"/>
<dbReference type="STRING" id="9606.ENSP00000410402"/>
<dbReference type="BindingDB" id="P45985"/>
<dbReference type="ChEMBL" id="CHEMBL2897"/>
<dbReference type="DrugBank" id="DB11718">
    <property type="generic name" value="Encorafenib"/>
</dbReference>
<dbReference type="DrugBank" id="DB14904">
    <property type="generic name" value="Pimasertib"/>
</dbReference>
<dbReference type="DrugCentral" id="P45985"/>
<dbReference type="GuidetoPHARMACOLOGY" id="2065"/>
<dbReference type="GlyCosmos" id="P45985">
    <property type="glycosylation" value="2 sites, 1 glycan"/>
</dbReference>
<dbReference type="GlyGen" id="P45985">
    <property type="glycosylation" value="4 sites, 1 O-linked glycan (2 sites)"/>
</dbReference>
<dbReference type="iPTMnet" id="P45985"/>
<dbReference type="PhosphoSitePlus" id="P45985"/>
<dbReference type="BioMuta" id="MAP2K4"/>
<dbReference type="DMDM" id="1170596"/>
<dbReference type="CPTAC" id="CPTAC-816"/>
<dbReference type="CPTAC" id="CPTAC-817"/>
<dbReference type="jPOST" id="P45985"/>
<dbReference type="MassIVE" id="P45985"/>
<dbReference type="PaxDb" id="9606-ENSP00000410402"/>
<dbReference type="PeptideAtlas" id="P45985"/>
<dbReference type="ProteomicsDB" id="55703">
    <molecule id="P45985-1"/>
</dbReference>
<dbReference type="ProteomicsDB" id="55704">
    <molecule id="P45985-2"/>
</dbReference>
<dbReference type="Pumba" id="P45985"/>
<dbReference type="Antibodypedia" id="3571">
    <property type="antibodies" value="1421 antibodies from 42 providers"/>
</dbReference>
<dbReference type="CPTC" id="P45985">
    <property type="antibodies" value="1 antibody"/>
</dbReference>
<dbReference type="DNASU" id="6416"/>
<dbReference type="Ensembl" id="ENST00000353533.10">
    <molecule id="P45985-1"/>
    <property type="protein sequence ID" value="ENSP00000262445.5"/>
    <property type="gene ID" value="ENSG00000065559.15"/>
</dbReference>
<dbReference type="Ensembl" id="ENST00000415385.7">
    <molecule id="P45985-2"/>
    <property type="protein sequence ID" value="ENSP00000410402.3"/>
    <property type="gene ID" value="ENSG00000065559.15"/>
</dbReference>
<dbReference type="GeneID" id="6416"/>
<dbReference type="KEGG" id="hsa:6416"/>
<dbReference type="MANE-Select" id="ENST00000353533.10">
    <property type="protein sequence ID" value="ENSP00000262445.5"/>
    <property type="RefSeq nucleotide sequence ID" value="NM_003010.4"/>
    <property type="RefSeq protein sequence ID" value="NP_003001.1"/>
</dbReference>
<dbReference type="UCSC" id="uc002gnj.5">
    <molecule id="P45985-1"/>
    <property type="organism name" value="human"/>
</dbReference>
<dbReference type="AGR" id="HGNC:6844"/>
<dbReference type="CTD" id="6416"/>
<dbReference type="DisGeNET" id="6416"/>
<dbReference type="GeneCards" id="MAP2K4"/>
<dbReference type="HGNC" id="HGNC:6844">
    <property type="gene designation" value="MAP2K4"/>
</dbReference>
<dbReference type="HPA" id="ENSG00000065559">
    <property type="expression patterns" value="Low tissue specificity"/>
</dbReference>
<dbReference type="MalaCards" id="MAP2K4"/>
<dbReference type="MIM" id="601335">
    <property type="type" value="gene"/>
</dbReference>
<dbReference type="neXtProt" id="NX_P45985"/>
<dbReference type="OpenTargets" id="ENSG00000065559"/>
<dbReference type="PharmGKB" id="PA30589"/>
<dbReference type="VEuPathDB" id="HostDB:ENSG00000065559"/>
<dbReference type="eggNOG" id="KOG1006">
    <property type="taxonomic scope" value="Eukaryota"/>
</dbReference>
<dbReference type="GeneTree" id="ENSGT00940000154744"/>
<dbReference type="HOGENOM" id="CLU_000288_63_23_1"/>
<dbReference type="InParanoid" id="P45985"/>
<dbReference type="OMA" id="HILLEFC"/>
<dbReference type="OrthoDB" id="10252354at2759"/>
<dbReference type="PAN-GO" id="P45985">
    <property type="GO annotations" value="2 GO annotations based on evolutionary models"/>
</dbReference>
<dbReference type="PhylomeDB" id="P45985"/>
<dbReference type="TreeFam" id="TF350701"/>
<dbReference type="BRENDA" id="2.7.12.2">
    <property type="organism ID" value="2681"/>
</dbReference>
<dbReference type="PathwayCommons" id="P45985"/>
<dbReference type="Reactome" id="R-HSA-2559580">
    <property type="pathway name" value="Oxidative Stress Induced Senescence"/>
</dbReference>
<dbReference type="Reactome" id="R-HSA-2871796">
    <property type="pathway name" value="FCERI mediated MAPK activation"/>
</dbReference>
<dbReference type="Reactome" id="R-HSA-450321">
    <property type="pathway name" value="JNK (c-Jun kinases) phosphorylation and activation mediated by activated human TAK1"/>
</dbReference>
<dbReference type="Reactome" id="R-HSA-5210891">
    <property type="pathway name" value="Uptake and function of anthrax toxins"/>
</dbReference>
<dbReference type="Reactome" id="R-HSA-5684264">
    <property type="pathway name" value="MAP3K8 (TPL2)-dependent MAPK1/3 activation"/>
</dbReference>
<dbReference type="SABIO-RK" id="P45985"/>
<dbReference type="SignaLink" id="P45985"/>
<dbReference type="SIGNOR" id="P45985"/>
<dbReference type="BioGRID-ORCS" id="6416">
    <property type="hits" value="53 hits in 1202 CRISPR screens"/>
</dbReference>
<dbReference type="ChiTaRS" id="MAP2K4">
    <property type="organism name" value="human"/>
</dbReference>
<dbReference type="EvolutionaryTrace" id="P45985"/>
<dbReference type="GeneWiki" id="MAP2K4"/>
<dbReference type="GenomeRNAi" id="6416"/>
<dbReference type="Pharos" id="P45985">
    <property type="development level" value="Tchem"/>
</dbReference>
<dbReference type="PRO" id="PR:P45985"/>
<dbReference type="Proteomes" id="UP000005640">
    <property type="component" value="Chromosome 17"/>
</dbReference>
<dbReference type="RNAct" id="P45985">
    <property type="molecule type" value="protein"/>
</dbReference>
<dbReference type="Bgee" id="ENSG00000065559">
    <property type="expression patterns" value="Expressed in lateral nuclear group of thalamus and 204 other cell types or tissues"/>
</dbReference>
<dbReference type="ExpressionAtlas" id="P45985">
    <property type="expression patterns" value="baseline and differential"/>
</dbReference>
<dbReference type="GO" id="GO:0005829">
    <property type="term" value="C:cytosol"/>
    <property type="evidence" value="ECO:0000304"/>
    <property type="project" value="Reactome"/>
</dbReference>
<dbReference type="GO" id="GO:0005634">
    <property type="term" value="C:nucleus"/>
    <property type="evidence" value="ECO:0007669"/>
    <property type="project" value="UniProtKB-SubCell"/>
</dbReference>
<dbReference type="GO" id="GO:0005524">
    <property type="term" value="F:ATP binding"/>
    <property type="evidence" value="ECO:0007669"/>
    <property type="project" value="UniProtKB-KW"/>
</dbReference>
<dbReference type="GO" id="GO:0008545">
    <property type="term" value="F:JUN kinase kinase activity"/>
    <property type="evidence" value="ECO:0000304"/>
    <property type="project" value="Reactome"/>
</dbReference>
<dbReference type="GO" id="GO:0004708">
    <property type="term" value="F:MAP kinase kinase activity"/>
    <property type="evidence" value="ECO:0000318"/>
    <property type="project" value="GO_Central"/>
</dbReference>
<dbReference type="GO" id="GO:0060090">
    <property type="term" value="F:molecular adaptor activity"/>
    <property type="evidence" value="ECO:0000269"/>
    <property type="project" value="DisProt"/>
</dbReference>
<dbReference type="GO" id="GO:0004672">
    <property type="term" value="F:protein kinase activity"/>
    <property type="evidence" value="ECO:0000304"/>
    <property type="project" value="ProtInc"/>
</dbReference>
<dbReference type="GO" id="GO:0106310">
    <property type="term" value="F:protein serine kinase activity"/>
    <property type="evidence" value="ECO:0007669"/>
    <property type="project" value="RHEA"/>
</dbReference>
<dbReference type="GO" id="GO:0004674">
    <property type="term" value="F:protein serine/threonine kinase activity"/>
    <property type="evidence" value="ECO:0007669"/>
    <property type="project" value="UniProtKB-KW"/>
</dbReference>
<dbReference type="GO" id="GO:0004713">
    <property type="term" value="F:protein tyrosine kinase activity"/>
    <property type="evidence" value="ECO:0007669"/>
    <property type="project" value="UniProtKB-KW"/>
</dbReference>
<dbReference type="GO" id="GO:0071260">
    <property type="term" value="P:cellular response to mechanical stimulus"/>
    <property type="evidence" value="ECO:0000270"/>
    <property type="project" value="UniProtKB"/>
</dbReference>
<dbReference type="GO" id="GO:0090398">
    <property type="term" value="P:cellular senescence"/>
    <property type="evidence" value="ECO:0000304"/>
    <property type="project" value="Reactome"/>
</dbReference>
<dbReference type="GO" id="GO:0038095">
    <property type="term" value="P:Fc-epsilon receptor signaling pathway"/>
    <property type="evidence" value="ECO:0000304"/>
    <property type="project" value="Reactome"/>
</dbReference>
<dbReference type="GO" id="GO:0036481">
    <property type="term" value="P:intrinsic apoptotic signaling pathway in response to hydrogen peroxide"/>
    <property type="evidence" value="ECO:0007669"/>
    <property type="project" value="Ensembl"/>
</dbReference>
<dbReference type="GO" id="GO:0007254">
    <property type="term" value="P:JNK cascade"/>
    <property type="evidence" value="ECO:0000304"/>
    <property type="project" value="Reactome"/>
</dbReference>
<dbReference type="GO" id="GO:0000165">
    <property type="term" value="P:MAPK cascade"/>
    <property type="evidence" value="ECO:0000318"/>
    <property type="project" value="GO_Central"/>
</dbReference>
<dbReference type="GO" id="GO:2000672">
    <property type="term" value="P:negative regulation of motor neuron apoptotic process"/>
    <property type="evidence" value="ECO:0007669"/>
    <property type="project" value="Ensembl"/>
</dbReference>
<dbReference type="GO" id="GO:0009611">
    <property type="term" value="P:response to wounding"/>
    <property type="evidence" value="ECO:0007669"/>
    <property type="project" value="Ensembl"/>
</dbReference>
<dbReference type="GO" id="GO:0007165">
    <property type="term" value="P:signal transduction"/>
    <property type="evidence" value="ECO:0000304"/>
    <property type="project" value="ProtInc"/>
</dbReference>
<dbReference type="GO" id="GO:0034390">
    <property type="term" value="P:smooth muscle cell apoptotic process"/>
    <property type="evidence" value="ECO:0007669"/>
    <property type="project" value="Ensembl"/>
</dbReference>
<dbReference type="CDD" id="cd06616">
    <property type="entry name" value="PKc_MKK4"/>
    <property type="match status" value="1"/>
</dbReference>
<dbReference type="DisProt" id="DP01400"/>
<dbReference type="FunFam" id="1.10.510.10:FF:000090">
    <property type="entry name" value="Dual specificity mitogen-activated protein kinase kinase 4"/>
    <property type="match status" value="1"/>
</dbReference>
<dbReference type="FunFam" id="3.30.200.20:FF:000126">
    <property type="entry name" value="Dual specificity mitogen-activated protein kinase kinase 4"/>
    <property type="match status" value="1"/>
</dbReference>
<dbReference type="Gene3D" id="3.30.200.20">
    <property type="entry name" value="Phosphorylase Kinase, domain 1"/>
    <property type="match status" value="1"/>
</dbReference>
<dbReference type="Gene3D" id="1.10.510.10">
    <property type="entry name" value="Transferase(Phosphotransferase) domain 1"/>
    <property type="match status" value="1"/>
</dbReference>
<dbReference type="InterPro" id="IPR011009">
    <property type="entry name" value="Kinase-like_dom_sf"/>
</dbReference>
<dbReference type="InterPro" id="IPR000719">
    <property type="entry name" value="Prot_kinase_dom"/>
</dbReference>
<dbReference type="InterPro" id="IPR017441">
    <property type="entry name" value="Protein_kinase_ATP_BS"/>
</dbReference>
<dbReference type="InterPro" id="IPR008271">
    <property type="entry name" value="Ser/Thr_kinase_AS"/>
</dbReference>
<dbReference type="PANTHER" id="PTHR48013:SF15">
    <property type="entry name" value="DUAL SPECIFICITY MITOGEN-ACTIVATED PROTEIN KINASE KINASE 4"/>
    <property type="match status" value="1"/>
</dbReference>
<dbReference type="PANTHER" id="PTHR48013">
    <property type="entry name" value="DUAL SPECIFICITY MITOGEN-ACTIVATED PROTEIN KINASE KINASE 5-RELATED"/>
    <property type="match status" value="1"/>
</dbReference>
<dbReference type="Pfam" id="PF00069">
    <property type="entry name" value="Pkinase"/>
    <property type="match status" value="1"/>
</dbReference>
<dbReference type="SMART" id="SM00220">
    <property type="entry name" value="S_TKc"/>
    <property type="match status" value="1"/>
</dbReference>
<dbReference type="SUPFAM" id="SSF56112">
    <property type="entry name" value="Protein kinase-like (PK-like)"/>
    <property type="match status" value="1"/>
</dbReference>
<dbReference type="PROSITE" id="PS00107">
    <property type="entry name" value="PROTEIN_KINASE_ATP"/>
    <property type="match status" value="1"/>
</dbReference>
<dbReference type="PROSITE" id="PS50011">
    <property type="entry name" value="PROTEIN_KINASE_DOM"/>
    <property type="match status" value="1"/>
</dbReference>
<dbReference type="PROSITE" id="PS00108">
    <property type="entry name" value="PROTEIN_KINASE_ST"/>
    <property type="match status" value="1"/>
</dbReference>
<reference key="1">
    <citation type="journal article" date="1995" name="Science">
        <title>Independent human MAP-kinase signal transduction pathways defined by MEK and MKK isoforms.</title>
        <authorList>
            <person name="Derijard B."/>
            <person name="Raingeaud J."/>
            <person name="Barrett T."/>
            <person name="Wu I.-H."/>
            <person name="Han J."/>
            <person name="Ulevitch R.J."/>
            <person name="Davis R.J."/>
        </authorList>
    </citation>
    <scope>NUCLEOTIDE SEQUENCE [MRNA] (ISOFORM 1)</scope>
    <source>
        <tissue>Brain</tissue>
    </source>
</reference>
<reference key="2">
    <citation type="journal article" date="1995" name="Science">
        <title>Identification of a dual specificity kinase that activates the Jun kinases and p38-Mpk2.</title>
        <authorList>
            <person name="Lin A."/>
            <person name="Minden A."/>
            <person name="Martinetto H."/>
            <person name="Claret F.-X."/>
            <person name="Lange-Carter C."/>
            <person name="Mercurio F."/>
            <person name="Johnson G.L."/>
            <person name="Karin M."/>
        </authorList>
    </citation>
    <scope>NUCLEOTIDE SEQUENCE [MRNA] (ISOFORM 1)</scope>
    <scope>FUNCTION</scope>
</reference>
<reference key="3">
    <citation type="journal article" date="1998" name="Cancer Res.">
        <title>Alterations in pancreatic, biliary, and breast carcinomas support MKK4 as a genetically targeted tumor suppressor gene.</title>
        <authorList>
            <person name="Su G.H."/>
            <person name="Hilgers W."/>
            <person name="Shekher M.C."/>
            <person name="Tang D.J."/>
            <person name="Yeo C.J."/>
            <person name="Hruban R.H."/>
            <person name="Kern S.E."/>
        </authorList>
    </citation>
    <scope>NUCLEOTIDE SEQUENCE [GENOMIC DNA]</scope>
</reference>
<reference key="4">
    <citation type="submission" date="2004-06" db="EMBL/GenBank/DDBJ databases">
        <title>Cloning of human full open reading frames in Gateway(TM) system entry vector (pDONR201).</title>
        <authorList>
            <person name="Ebert L."/>
            <person name="Schick M."/>
            <person name="Neubert P."/>
            <person name="Schatten R."/>
            <person name="Henze S."/>
            <person name="Korn B."/>
        </authorList>
    </citation>
    <scope>NUCLEOTIDE SEQUENCE [LARGE SCALE MRNA] (ISOFORM 1)</scope>
</reference>
<reference key="5">
    <citation type="submission" date="2004-10" db="EMBL/GenBank/DDBJ databases">
        <title>Cloning of human full-length CDSs in BD Creator(TM) system donor vector.</title>
        <authorList>
            <person name="Kalnine N."/>
            <person name="Chen X."/>
            <person name="Rolfs A."/>
            <person name="Halleck A."/>
            <person name="Hines L."/>
            <person name="Eisenstein S."/>
            <person name="Koundinya M."/>
            <person name="Raphael J."/>
            <person name="Moreira D."/>
            <person name="Kelley T."/>
            <person name="LaBaer J."/>
            <person name="Lin Y."/>
            <person name="Phelan M."/>
            <person name="Farmer A."/>
        </authorList>
    </citation>
    <scope>NUCLEOTIDE SEQUENCE [LARGE SCALE MRNA] (ISOFORM 1)</scope>
</reference>
<reference key="6">
    <citation type="journal article" date="2004" name="Nat. Genet.">
        <title>Complete sequencing and characterization of 21,243 full-length human cDNAs.</title>
        <authorList>
            <person name="Ota T."/>
            <person name="Suzuki Y."/>
            <person name="Nishikawa T."/>
            <person name="Otsuki T."/>
            <person name="Sugiyama T."/>
            <person name="Irie R."/>
            <person name="Wakamatsu A."/>
            <person name="Hayashi K."/>
            <person name="Sato H."/>
            <person name="Nagai K."/>
            <person name="Kimura K."/>
            <person name="Makita H."/>
            <person name="Sekine M."/>
            <person name="Obayashi M."/>
            <person name="Nishi T."/>
            <person name="Shibahara T."/>
            <person name="Tanaka T."/>
            <person name="Ishii S."/>
            <person name="Yamamoto J."/>
            <person name="Saito K."/>
            <person name="Kawai Y."/>
            <person name="Isono Y."/>
            <person name="Nakamura Y."/>
            <person name="Nagahari K."/>
            <person name="Murakami K."/>
            <person name="Yasuda T."/>
            <person name="Iwayanagi T."/>
            <person name="Wagatsuma M."/>
            <person name="Shiratori A."/>
            <person name="Sudo H."/>
            <person name="Hosoiri T."/>
            <person name="Kaku Y."/>
            <person name="Kodaira H."/>
            <person name="Kondo H."/>
            <person name="Sugawara M."/>
            <person name="Takahashi M."/>
            <person name="Kanda K."/>
            <person name="Yokoi T."/>
            <person name="Furuya T."/>
            <person name="Kikkawa E."/>
            <person name="Omura Y."/>
            <person name="Abe K."/>
            <person name="Kamihara K."/>
            <person name="Katsuta N."/>
            <person name="Sato K."/>
            <person name="Tanikawa M."/>
            <person name="Yamazaki M."/>
            <person name="Ninomiya K."/>
            <person name="Ishibashi T."/>
            <person name="Yamashita H."/>
            <person name="Murakawa K."/>
            <person name="Fujimori K."/>
            <person name="Tanai H."/>
            <person name="Kimata M."/>
            <person name="Watanabe M."/>
            <person name="Hiraoka S."/>
            <person name="Chiba Y."/>
            <person name="Ishida S."/>
            <person name="Ono Y."/>
            <person name="Takiguchi S."/>
            <person name="Watanabe S."/>
            <person name="Yosida M."/>
            <person name="Hotuta T."/>
            <person name="Kusano J."/>
            <person name="Kanehori K."/>
            <person name="Takahashi-Fujii A."/>
            <person name="Hara H."/>
            <person name="Tanase T.-O."/>
            <person name="Nomura Y."/>
            <person name="Togiya S."/>
            <person name="Komai F."/>
            <person name="Hara R."/>
            <person name="Takeuchi K."/>
            <person name="Arita M."/>
            <person name="Imose N."/>
            <person name="Musashino K."/>
            <person name="Yuuki H."/>
            <person name="Oshima A."/>
            <person name="Sasaki N."/>
            <person name="Aotsuka S."/>
            <person name="Yoshikawa Y."/>
            <person name="Matsunawa H."/>
            <person name="Ichihara T."/>
            <person name="Shiohata N."/>
            <person name="Sano S."/>
            <person name="Moriya S."/>
            <person name="Momiyama H."/>
            <person name="Satoh N."/>
            <person name="Takami S."/>
            <person name="Terashima Y."/>
            <person name="Suzuki O."/>
            <person name="Nakagawa S."/>
            <person name="Senoh A."/>
            <person name="Mizoguchi H."/>
            <person name="Goto Y."/>
            <person name="Shimizu F."/>
            <person name="Wakebe H."/>
            <person name="Hishigaki H."/>
            <person name="Watanabe T."/>
            <person name="Sugiyama A."/>
            <person name="Takemoto M."/>
            <person name="Kawakami B."/>
            <person name="Yamazaki M."/>
            <person name="Watanabe K."/>
            <person name="Kumagai A."/>
            <person name="Itakura S."/>
            <person name="Fukuzumi Y."/>
            <person name="Fujimori Y."/>
            <person name="Komiyama M."/>
            <person name="Tashiro H."/>
            <person name="Tanigami A."/>
            <person name="Fujiwara T."/>
            <person name="Ono T."/>
            <person name="Yamada K."/>
            <person name="Fujii Y."/>
            <person name="Ozaki K."/>
            <person name="Hirao M."/>
            <person name="Ohmori Y."/>
            <person name="Kawabata A."/>
            <person name="Hikiji T."/>
            <person name="Kobatake N."/>
            <person name="Inagaki H."/>
            <person name="Ikema Y."/>
            <person name="Okamoto S."/>
            <person name="Okitani R."/>
            <person name="Kawakami T."/>
            <person name="Noguchi S."/>
            <person name="Itoh T."/>
            <person name="Shigeta K."/>
            <person name="Senba T."/>
            <person name="Matsumura K."/>
            <person name="Nakajima Y."/>
            <person name="Mizuno T."/>
            <person name="Morinaga M."/>
            <person name="Sasaki M."/>
            <person name="Togashi T."/>
            <person name="Oyama M."/>
            <person name="Hata H."/>
            <person name="Watanabe M."/>
            <person name="Komatsu T."/>
            <person name="Mizushima-Sugano J."/>
            <person name="Satoh T."/>
            <person name="Shirai Y."/>
            <person name="Takahashi Y."/>
            <person name="Nakagawa K."/>
            <person name="Okumura K."/>
            <person name="Nagase T."/>
            <person name="Nomura N."/>
            <person name="Kikuchi H."/>
            <person name="Masuho Y."/>
            <person name="Yamashita R."/>
            <person name="Nakai K."/>
            <person name="Yada T."/>
            <person name="Nakamura Y."/>
            <person name="Ohara O."/>
            <person name="Isogai T."/>
            <person name="Sugano S."/>
        </authorList>
    </citation>
    <scope>NUCLEOTIDE SEQUENCE [LARGE SCALE MRNA] (ISOFORM 2)</scope>
    <source>
        <tissue>Brain</tissue>
        <tissue>Thalamus</tissue>
    </source>
</reference>
<reference key="7">
    <citation type="submission" date="2005-04" db="EMBL/GenBank/DDBJ databases">
        <authorList>
            <consortium name="NIEHS SNPs program"/>
        </authorList>
    </citation>
    <scope>NUCLEOTIDE SEQUENCE [GENOMIC DNA]</scope>
</reference>
<reference key="8">
    <citation type="journal article" date="2006" name="Nature">
        <title>DNA sequence of human chromosome 17 and analysis of rearrangement in the human lineage.</title>
        <authorList>
            <person name="Zody M.C."/>
            <person name="Garber M."/>
            <person name="Adams D.J."/>
            <person name="Sharpe T."/>
            <person name="Harrow J."/>
            <person name="Lupski J.R."/>
            <person name="Nicholson C."/>
            <person name="Searle S.M."/>
            <person name="Wilming L."/>
            <person name="Young S.K."/>
            <person name="Abouelleil A."/>
            <person name="Allen N.R."/>
            <person name="Bi W."/>
            <person name="Bloom T."/>
            <person name="Borowsky M.L."/>
            <person name="Bugalter B.E."/>
            <person name="Butler J."/>
            <person name="Chang J.L."/>
            <person name="Chen C.-K."/>
            <person name="Cook A."/>
            <person name="Corum B."/>
            <person name="Cuomo C.A."/>
            <person name="de Jong P.J."/>
            <person name="DeCaprio D."/>
            <person name="Dewar K."/>
            <person name="FitzGerald M."/>
            <person name="Gilbert J."/>
            <person name="Gibson R."/>
            <person name="Gnerre S."/>
            <person name="Goldstein S."/>
            <person name="Grafham D.V."/>
            <person name="Grocock R."/>
            <person name="Hafez N."/>
            <person name="Hagopian D.S."/>
            <person name="Hart E."/>
            <person name="Norman C.H."/>
            <person name="Humphray S."/>
            <person name="Jaffe D.B."/>
            <person name="Jones M."/>
            <person name="Kamal M."/>
            <person name="Khodiyar V.K."/>
            <person name="LaButti K."/>
            <person name="Laird G."/>
            <person name="Lehoczky J."/>
            <person name="Liu X."/>
            <person name="Lokyitsang T."/>
            <person name="Loveland J."/>
            <person name="Lui A."/>
            <person name="Macdonald P."/>
            <person name="Major J.E."/>
            <person name="Matthews L."/>
            <person name="Mauceli E."/>
            <person name="McCarroll S.A."/>
            <person name="Mihalev A.H."/>
            <person name="Mudge J."/>
            <person name="Nguyen C."/>
            <person name="Nicol R."/>
            <person name="O'Leary S.B."/>
            <person name="Osoegawa K."/>
            <person name="Schwartz D.C."/>
            <person name="Shaw-Smith C."/>
            <person name="Stankiewicz P."/>
            <person name="Steward C."/>
            <person name="Swarbreck D."/>
            <person name="Venkataraman V."/>
            <person name="Whittaker C.A."/>
            <person name="Yang X."/>
            <person name="Zimmer A.R."/>
            <person name="Bradley A."/>
            <person name="Hubbard T."/>
            <person name="Birren B.W."/>
            <person name="Rogers J."/>
            <person name="Lander E.S."/>
            <person name="Nusbaum C."/>
        </authorList>
    </citation>
    <scope>NUCLEOTIDE SEQUENCE [LARGE SCALE GENOMIC DNA]</scope>
</reference>
<reference key="9">
    <citation type="submission" date="2005-09" db="EMBL/GenBank/DDBJ databases">
        <authorList>
            <person name="Mural R.J."/>
            <person name="Istrail S."/>
            <person name="Sutton G.G."/>
            <person name="Florea L."/>
            <person name="Halpern A.L."/>
            <person name="Mobarry C.M."/>
            <person name="Lippert R."/>
            <person name="Walenz B."/>
            <person name="Shatkay H."/>
            <person name="Dew I."/>
            <person name="Miller J.R."/>
            <person name="Flanigan M.J."/>
            <person name="Edwards N.J."/>
            <person name="Bolanos R."/>
            <person name="Fasulo D."/>
            <person name="Halldorsson B.V."/>
            <person name="Hannenhalli S."/>
            <person name="Turner R."/>
            <person name="Yooseph S."/>
            <person name="Lu F."/>
            <person name="Nusskern D.R."/>
            <person name="Shue B.C."/>
            <person name="Zheng X.H."/>
            <person name="Zhong F."/>
            <person name="Delcher A.L."/>
            <person name="Huson D.H."/>
            <person name="Kravitz S.A."/>
            <person name="Mouchard L."/>
            <person name="Reinert K."/>
            <person name="Remington K.A."/>
            <person name="Clark A.G."/>
            <person name="Waterman M.S."/>
            <person name="Eichler E.E."/>
            <person name="Adams M.D."/>
            <person name="Hunkapiller M.W."/>
            <person name="Myers E.W."/>
            <person name="Venter J.C."/>
        </authorList>
    </citation>
    <scope>NUCLEOTIDE SEQUENCE [LARGE SCALE GENOMIC DNA]</scope>
</reference>
<reference key="10">
    <citation type="journal article" date="2004" name="Genome Res.">
        <title>The status, quality, and expansion of the NIH full-length cDNA project: the Mammalian Gene Collection (MGC).</title>
        <authorList>
            <consortium name="The MGC Project Team"/>
        </authorList>
    </citation>
    <scope>NUCLEOTIDE SEQUENCE [LARGE SCALE MRNA] (ISOFORM 1)</scope>
    <scope>VARIANT ARG-16</scope>
    <source>
        <tissue>Brain</tissue>
        <tissue>Testis</tissue>
    </source>
</reference>
<reference key="11">
    <citation type="journal article" date="1996" name="EMBO J.">
        <title>MLK-3 activates the SAPK/JNK and p38/RK pathways via SEK1 and MKK3/6.</title>
        <authorList>
            <person name="Tibbles L.A."/>
            <person name="Ing Y.L."/>
            <person name="Kiefer F."/>
            <person name="Chan J."/>
            <person name="Iscove N."/>
            <person name="Woodgett J.R."/>
            <person name="Lassam N.J."/>
        </authorList>
    </citation>
    <scope>PHOSPHORYLATION AT THR-261</scope>
    <scope>ACTIVITY REGULATION</scope>
    <scope>INTERACTION WITH MAP3K11/MLK3</scope>
</reference>
<reference key="12">
    <citation type="journal article" date="2000" name="Biochem. J.">
        <title>Susceptibility of mitogen-activated protein kinase kinase family members to proteolysis by anthrax lethal factor.</title>
        <authorList>
            <person name="Vitale G."/>
            <person name="Bernardi L."/>
            <person name="Napolitani G."/>
            <person name="Mock M."/>
            <person name="Montecucco C."/>
        </authorList>
    </citation>
    <scope>CLEAVAGE BY ANTHRAX LETHAL FACTOR</scope>
</reference>
<reference key="13">
    <citation type="journal article" date="2000" name="Science">
        <title>Beta-arrestin 2: a receptor-regulated MAPK scaffold for the activation of JNK3.</title>
        <authorList>
            <person name="McDonald P.H."/>
            <person name="Chow C.W."/>
            <person name="Miller W.E."/>
            <person name="Laporte S.A."/>
            <person name="Field M.E."/>
            <person name="Lin F.-T."/>
            <person name="Davis R.J."/>
            <person name="Lefkowitz R.J."/>
        </authorList>
    </citation>
    <scope>INTERACTION WITH ARRB2</scope>
</reference>
<reference key="14">
    <citation type="journal article" date="2002" name="J. Biol. Chem.">
        <title>Phosphorylation-dependent scaffolding role of JSAP1/JIP3 in the ASK1-JNK signaling pathway. A new mode of regulation of the MAP kinase cascade.</title>
        <authorList>
            <person name="Matsuura H."/>
            <person name="Nishitoh H."/>
            <person name="Takeda K."/>
            <person name="Matsuzawa A."/>
            <person name="Amagasa T."/>
            <person name="Ito M."/>
            <person name="Yoshioka K."/>
            <person name="Ichijo H."/>
        </authorList>
    </citation>
    <scope>INTERACTION WITH MAPK8IP3/JIP3</scope>
</reference>
<reference key="15">
    <citation type="journal article" date="2003" name="J. Biol. Chem.">
        <title>A docking site in MKK4 mediates high affinity binding to JNK MAPKs and competes with similar docking sites in JNK substrates.</title>
        <authorList>
            <person name="Ho D.T."/>
            <person name="Bardwell A.J."/>
            <person name="Abdollahi M."/>
            <person name="Bardwell L."/>
        </authorList>
    </citation>
    <scope>DOMAIN</scope>
    <scope>INTERACTION WITH MAPK8/JNK1; MAPK9/JNK2; MAPK10/JNK3; MAPK11 AND MAPK14</scope>
</reference>
<reference key="16">
    <citation type="journal article" date="2005" name="Mol. Cell">
        <title>Conserved docking site is essential for activation of mammalian MAP kinase kinases by specific MAP kinase kinase kinases.</title>
        <authorList>
            <person name="Takekawa M."/>
            <person name="Tatebayashi K."/>
            <person name="Saito H."/>
        </authorList>
    </citation>
    <scope>DOMAIN</scope>
</reference>
<reference key="17">
    <citation type="journal article" date="2008" name="Proc. Natl. Acad. Sci. U.S.A.">
        <title>A quantitative atlas of mitotic phosphorylation.</title>
        <authorList>
            <person name="Dephoure N."/>
            <person name="Zhou C."/>
            <person name="Villen J."/>
            <person name="Beausoleil S.A."/>
            <person name="Bakalarski C.E."/>
            <person name="Elledge S.J."/>
            <person name="Gygi S.P."/>
        </authorList>
    </citation>
    <scope>PHOSPHORYLATION [LARGE SCALE ANALYSIS] AT SER-90</scope>
    <scope>IDENTIFICATION BY MASS SPECTROMETRY [LARGE SCALE ANALYSIS]</scope>
    <source>
        <tissue>Cervix carcinoma</tissue>
    </source>
</reference>
<reference key="18">
    <citation type="journal article" date="2009" name="Anal. Chem.">
        <title>Lys-N and trypsin cover complementary parts of the phosphoproteome in a refined SCX-based approach.</title>
        <authorList>
            <person name="Gauci S."/>
            <person name="Helbig A.O."/>
            <person name="Slijper M."/>
            <person name="Krijgsveld J."/>
            <person name="Heck A.J."/>
            <person name="Mohammed S."/>
        </authorList>
    </citation>
    <scope>ACETYLATION [LARGE SCALE ANALYSIS] AT ALA-2</scope>
    <scope>CLEAVAGE OF INITIATOR METHIONINE [LARGE SCALE ANALYSIS]</scope>
    <scope>IDENTIFICATION BY MASS SPECTROMETRY [LARGE SCALE ANALYSIS]</scope>
</reference>
<reference key="19">
    <citation type="journal article" date="2009" name="FEBS Lett.">
        <title>A scanning peptide array approach uncovers association sites within the JNK/beta arrestin signalling complex.</title>
        <authorList>
            <person name="Li X."/>
            <person name="MacLeod R."/>
            <person name="Dunlop A.J."/>
            <person name="Edwards H.V."/>
            <person name="Advant N."/>
            <person name="Gibson L.C."/>
            <person name="Devine N.M."/>
            <person name="Brown K.M."/>
            <person name="Adams D.R."/>
            <person name="Houslay M.D."/>
            <person name="Baillie G.S."/>
        </authorList>
    </citation>
    <scope>INTERACTION WITH ARRB1 AND ARRB2</scope>
</reference>
<reference key="20">
    <citation type="journal article" date="2007" name="Oncogene">
        <title>Differential regulation and properties of MAPKs.</title>
        <authorList>
            <person name="Raman M."/>
            <person name="Chen W."/>
            <person name="Cobb M.H."/>
        </authorList>
    </citation>
    <scope>REVIEW ON ACTIVITY REGULATION</scope>
</reference>
<reference key="21">
    <citation type="journal article" date="2009" name="Mol. Cell. Proteomics">
        <title>Large-scale proteomics analysis of the human kinome.</title>
        <authorList>
            <person name="Oppermann F.S."/>
            <person name="Gnad F."/>
            <person name="Olsen J.V."/>
            <person name="Hornberger R."/>
            <person name="Greff Z."/>
            <person name="Keri G."/>
            <person name="Mann M."/>
            <person name="Daub H."/>
        </authorList>
    </citation>
    <scope>PHOSPHORYLATION [LARGE SCALE ANALYSIS] AT SER-257</scope>
    <scope>IDENTIFICATION BY MASS SPECTROMETRY [LARGE SCALE ANALYSIS]</scope>
</reference>
<reference key="22">
    <citation type="journal article" date="2010" name="J. Biochem.">
        <title>Diverse physiological functions of MKK4 and MKK7 during early embryogenesis.</title>
        <authorList>
            <person name="Asaoka Y."/>
            <person name="Nishina H."/>
        </authorList>
    </citation>
    <scope>REVIEW ON FUNCTION</scope>
</reference>
<reference key="23">
    <citation type="journal article" date="2010" name="Sci. Signal.">
        <title>Quantitative phosphoproteomics reveals widespread full phosphorylation site occupancy during mitosis.</title>
        <authorList>
            <person name="Olsen J.V."/>
            <person name="Vermeulen M."/>
            <person name="Santamaria A."/>
            <person name="Kumar C."/>
            <person name="Miller M.L."/>
            <person name="Jensen L.J."/>
            <person name="Gnad F."/>
            <person name="Cox J."/>
            <person name="Jensen T.S."/>
            <person name="Nigg E.A."/>
            <person name="Brunak S."/>
            <person name="Mann M."/>
        </authorList>
    </citation>
    <scope>IDENTIFICATION BY MASS SPECTROMETRY [LARGE SCALE ANALYSIS]</scope>
    <source>
        <tissue>Cervix carcinoma</tissue>
    </source>
</reference>
<reference key="24">
    <citation type="journal article" date="2011" name="BMC Syst. Biol.">
        <title>Initial characterization of the human central proteome.</title>
        <authorList>
            <person name="Burkard T.R."/>
            <person name="Planyavsky M."/>
            <person name="Kaupe I."/>
            <person name="Breitwieser F.P."/>
            <person name="Buerckstuemmer T."/>
            <person name="Bennett K.L."/>
            <person name="Superti-Furga G."/>
            <person name="Colinge J."/>
        </authorList>
    </citation>
    <scope>IDENTIFICATION BY MASS SPECTROMETRY [LARGE SCALE ANALYSIS]</scope>
</reference>
<reference key="25">
    <citation type="journal article" date="2011" name="Eur. J. Cell Biol.">
        <title>The bottleneck of JNK signaling: molecular and functional characteristics of MKK4 and MKK7.</title>
        <authorList>
            <person name="Haeusgen W."/>
            <person name="Herdegen T."/>
            <person name="Waetzig V."/>
        </authorList>
    </citation>
    <scope>REVIEW ON REGULATION</scope>
    <scope>REVIEW ON FUNCTION</scope>
</reference>
<reference key="26">
    <citation type="journal article" date="2014" name="J. Proteomics">
        <title>An enzyme assisted RP-RPLC approach for in-depth analysis of human liver phosphoproteome.</title>
        <authorList>
            <person name="Bian Y."/>
            <person name="Song C."/>
            <person name="Cheng K."/>
            <person name="Dong M."/>
            <person name="Wang F."/>
            <person name="Huang J."/>
            <person name="Sun D."/>
            <person name="Wang L."/>
            <person name="Ye M."/>
            <person name="Zou H."/>
        </authorList>
    </citation>
    <scope>PHOSPHORYLATION [LARGE SCALE ANALYSIS] AT SER-257</scope>
    <scope>IDENTIFICATION BY MASS SPECTROMETRY [LARGE SCALE ANALYSIS]</scope>
    <source>
        <tissue>Liver</tissue>
    </source>
</reference>
<reference key="27">
    <citation type="journal article" date="2014" name="Mol. Cell. Proteomics">
        <title>Immunoaffinity enrichment and mass spectrometry analysis of protein methylation.</title>
        <authorList>
            <person name="Guo A."/>
            <person name="Gu H."/>
            <person name="Zhou J."/>
            <person name="Mulhern D."/>
            <person name="Wang Y."/>
            <person name="Lee K.A."/>
            <person name="Yang V."/>
            <person name="Aguiar M."/>
            <person name="Kornhauser J."/>
            <person name="Jia X."/>
            <person name="Ren J."/>
            <person name="Beausoleil S.A."/>
            <person name="Silva J.C."/>
            <person name="Vemulapalli V."/>
            <person name="Bedford M.T."/>
            <person name="Comb M.J."/>
        </authorList>
    </citation>
    <scope>METHYLATION [LARGE SCALE ANALYSIS] AT ARG-58</scope>
    <scope>IDENTIFICATION BY MASS SPECTROMETRY [LARGE SCALE ANALYSIS]</scope>
    <source>
        <tissue>Colon carcinoma</tissue>
    </source>
</reference>
<reference key="28">
    <citation type="journal article" date="2010" name="Biochem. Biophys. Res. Commun.">
        <title>Crystal structures of MKK4 kinase domain reveal that substrate peptide binds to an allosteric site and induces an auto-inhibition state.</title>
        <authorList>
            <person name="Matsumoto T."/>
            <person name="Kinoshita T."/>
            <person name="Kirii Y."/>
            <person name="Yokota K."/>
            <person name="Hamada K."/>
            <person name="Tada T."/>
        </authorList>
    </citation>
    <scope>X-RAY CRYSTALLOGRAPHY (2.30 ANGSTROMS) OF 80-399</scope>
</reference>
<reference key="29">
    <citation type="journal article" date="2007" name="Nature">
        <title>Patterns of somatic mutation in human cancer genomes.</title>
        <authorList>
            <person name="Greenman C."/>
            <person name="Stephens P."/>
            <person name="Smith R."/>
            <person name="Dalgliesh G.L."/>
            <person name="Hunter C."/>
            <person name="Bignell G."/>
            <person name="Davies H."/>
            <person name="Teague J."/>
            <person name="Butler A."/>
            <person name="Stevens C."/>
            <person name="Edkins S."/>
            <person name="O'Meara S."/>
            <person name="Vastrik I."/>
            <person name="Schmidt E.E."/>
            <person name="Avis T."/>
            <person name="Barthorpe S."/>
            <person name="Bhamra G."/>
            <person name="Buck G."/>
            <person name="Choudhury B."/>
            <person name="Clements J."/>
            <person name="Cole J."/>
            <person name="Dicks E."/>
            <person name="Forbes S."/>
            <person name="Gray K."/>
            <person name="Halliday K."/>
            <person name="Harrison R."/>
            <person name="Hills K."/>
            <person name="Hinton J."/>
            <person name="Jenkinson A."/>
            <person name="Jones D."/>
            <person name="Menzies A."/>
            <person name="Mironenko T."/>
            <person name="Perry J."/>
            <person name="Raine K."/>
            <person name="Richardson D."/>
            <person name="Shepherd R."/>
            <person name="Small A."/>
            <person name="Tofts C."/>
            <person name="Varian J."/>
            <person name="Webb T."/>
            <person name="West S."/>
            <person name="Widaa S."/>
            <person name="Yates A."/>
            <person name="Cahill D.P."/>
            <person name="Louis D.N."/>
            <person name="Goldstraw P."/>
            <person name="Nicholson A.G."/>
            <person name="Brasseur F."/>
            <person name="Looijenga L."/>
            <person name="Weber B.L."/>
            <person name="Chiew Y.-E."/>
            <person name="DeFazio A."/>
            <person name="Greaves M.F."/>
            <person name="Green A.R."/>
            <person name="Campbell P."/>
            <person name="Birney E."/>
            <person name="Easton D.F."/>
            <person name="Chenevix-Trench G."/>
            <person name="Tan M.-H."/>
            <person name="Khoo S.K."/>
            <person name="Teh B.T."/>
            <person name="Yuen S.T."/>
            <person name="Leung S.Y."/>
            <person name="Wooster R."/>
            <person name="Futreal P.A."/>
            <person name="Stratton M.R."/>
        </authorList>
    </citation>
    <scope>VARIANTS [LARGE SCALE ANALYSIS] LEU-142; TRP-154; ILE-234; ASN-251 AND THR-279</scope>
</reference>